<gene>
    <name type="primary">DUT</name>
    <name type="ordered locus">FPV038</name>
</gene>
<evidence type="ECO:0000250" key="1"/>
<evidence type="ECO:0000305" key="2"/>
<reference key="1">
    <citation type="journal article" date="2000" name="J. Virol.">
        <title>The genome of fowlpox virus.</title>
        <authorList>
            <person name="Afonso C.L."/>
            <person name="Tulman E.R."/>
            <person name="Lu Z."/>
            <person name="Zsak L."/>
            <person name="Kutish G.F."/>
            <person name="Rock D.L."/>
        </authorList>
    </citation>
    <scope>NUCLEOTIDE SEQUENCE [LARGE SCALE GENOMIC DNA]</scope>
</reference>
<proteinExistence type="inferred from homology"/>
<dbReference type="EC" id="3.6.1.23"/>
<dbReference type="EMBL" id="AF198100">
    <property type="protein sequence ID" value="AAF44382.1"/>
    <property type="molecule type" value="Genomic_DNA"/>
</dbReference>
<dbReference type="RefSeq" id="NP_039001.1">
    <property type="nucleotide sequence ID" value="NC_002188.1"/>
</dbReference>
<dbReference type="SMR" id="Q9J5G5"/>
<dbReference type="GeneID" id="1486586"/>
<dbReference type="KEGG" id="vg:1486586"/>
<dbReference type="Proteomes" id="UP000008597">
    <property type="component" value="Segment"/>
</dbReference>
<dbReference type="GO" id="GO:0004170">
    <property type="term" value="F:dUTP diphosphatase activity"/>
    <property type="evidence" value="ECO:0007669"/>
    <property type="project" value="UniProtKB-EC"/>
</dbReference>
<dbReference type="GO" id="GO:0000287">
    <property type="term" value="F:magnesium ion binding"/>
    <property type="evidence" value="ECO:0007669"/>
    <property type="project" value="InterPro"/>
</dbReference>
<dbReference type="GO" id="GO:0006226">
    <property type="term" value="P:dUMP biosynthetic process"/>
    <property type="evidence" value="ECO:0007669"/>
    <property type="project" value="InterPro"/>
</dbReference>
<dbReference type="GO" id="GO:0046081">
    <property type="term" value="P:dUTP catabolic process"/>
    <property type="evidence" value="ECO:0007669"/>
    <property type="project" value="InterPro"/>
</dbReference>
<dbReference type="CDD" id="cd07557">
    <property type="entry name" value="trimeric_dUTPase"/>
    <property type="match status" value="1"/>
</dbReference>
<dbReference type="Gene3D" id="2.70.40.10">
    <property type="match status" value="1"/>
</dbReference>
<dbReference type="InterPro" id="IPR008181">
    <property type="entry name" value="dUTPase"/>
</dbReference>
<dbReference type="InterPro" id="IPR029054">
    <property type="entry name" value="dUTPase-like"/>
</dbReference>
<dbReference type="InterPro" id="IPR036157">
    <property type="entry name" value="dUTPase-like_sf"/>
</dbReference>
<dbReference type="InterPro" id="IPR033704">
    <property type="entry name" value="dUTPase_trimeric"/>
</dbReference>
<dbReference type="NCBIfam" id="TIGR00576">
    <property type="entry name" value="dut"/>
    <property type="match status" value="1"/>
</dbReference>
<dbReference type="NCBIfam" id="NF001862">
    <property type="entry name" value="PRK00601.1"/>
    <property type="match status" value="1"/>
</dbReference>
<dbReference type="PANTHER" id="PTHR11241">
    <property type="entry name" value="DEOXYURIDINE 5'-TRIPHOSPHATE NUCLEOTIDOHYDROLASE"/>
    <property type="match status" value="1"/>
</dbReference>
<dbReference type="PANTHER" id="PTHR11241:SF0">
    <property type="entry name" value="DEOXYURIDINE 5'-TRIPHOSPHATE NUCLEOTIDOHYDROLASE"/>
    <property type="match status" value="1"/>
</dbReference>
<dbReference type="Pfam" id="PF00692">
    <property type="entry name" value="dUTPase"/>
    <property type="match status" value="1"/>
</dbReference>
<dbReference type="SUPFAM" id="SSF51283">
    <property type="entry name" value="dUTPase-like"/>
    <property type="match status" value="1"/>
</dbReference>
<feature type="chain" id="PRO_0000182947" description="Deoxyuridine 5'-triphosphate nucleotidohydrolase">
    <location>
        <begin position="1"/>
        <end position="145"/>
    </location>
</feature>
<comment type="function">
    <text evidence="1">This enzyme is involved in nucleotide metabolism: it produces dUMP, the immediate precursor of thymidine nucleotides and it decreases the intracellular concentration of dUTP so that uracil cannot be incorporated into DNA.</text>
</comment>
<comment type="catalytic activity">
    <reaction>
        <text>dUTP + H2O = dUMP + diphosphate + H(+)</text>
        <dbReference type="Rhea" id="RHEA:10248"/>
        <dbReference type="ChEBI" id="CHEBI:15377"/>
        <dbReference type="ChEBI" id="CHEBI:15378"/>
        <dbReference type="ChEBI" id="CHEBI:33019"/>
        <dbReference type="ChEBI" id="CHEBI:61555"/>
        <dbReference type="ChEBI" id="CHEBI:246422"/>
        <dbReference type="EC" id="3.6.1.23"/>
    </reaction>
</comment>
<comment type="cofactor">
    <cofactor evidence="1">
        <name>Mg(2+)</name>
        <dbReference type="ChEBI" id="CHEBI:18420"/>
    </cofactor>
</comment>
<comment type="similarity">
    <text evidence="2">Belongs to the dUTPase family.</text>
</comment>
<organism>
    <name type="scientific">Fowlpox virus (strain NVSL)</name>
    <name type="common">FPV</name>
    <dbReference type="NCBI Taxonomy" id="928301"/>
    <lineage>
        <taxon>Viruses</taxon>
        <taxon>Varidnaviria</taxon>
        <taxon>Bamfordvirae</taxon>
        <taxon>Nucleocytoviricota</taxon>
        <taxon>Pokkesviricetes</taxon>
        <taxon>Chitovirales</taxon>
        <taxon>Poxviridae</taxon>
        <taxon>Chordopoxvirinae</taxon>
        <taxon>Avipoxvirus</taxon>
        <taxon>Fowlpox virus</taxon>
    </lineage>
</organism>
<accession>Q9J5G5</accession>
<name>DUT_FOWPN</name>
<sequence>MEEVTVYKISDRAKLPYKQTSYSAGYDLYSAYDYVIEPMNKELIKTDIILKIPNGYYGRIAPRSGLAYNYFIDVGAGVIDSDYRGNVGVLLFNFGSTQFNVCKGDRIAQIIFEKIAYPKIIEVTTLEEINITDRGNSGFGSTGLK</sequence>
<keyword id="KW-0378">Hydrolase</keyword>
<keyword id="KW-0460">Magnesium</keyword>
<keyword id="KW-0479">Metal-binding</keyword>
<keyword id="KW-0546">Nucleotide metabolism</keyword>
<keyword id="KW-1185">Reference proteome</keyword>
<organismHost>
    <name type="scientific">Vertebrata</name>
    <dbReference type="NCBI Taxonomy" id="7742"/>
</organismHost>
<protein>
    <recommendedName>
        <fullName>Deoxyuridine 5'-triphosphate nucleotidohydrolase</fullName>
        <shortName>dUTPase</shortName>
        <ecNumber>3.6.1.23</ecNumber>
    </recommendedName>
    <alternativeName>
        <fullName>dUTP pyrophosphatase</fullName>
    </alternativeName>
</protein>